<protein>
    <recommendedName>
        <fullName>Glutamine synthetase cytosolic isozyme</fullName>
        <ecNumber>6.3.1.2</ecNumber>
    </recommendedName>
    <alternativeName>
        <fullName>GS1</fullName>
    </alternativeName>
    <alternativeName>
        <fullName>Glutamate--ammonia ligase</fullName>
    </alternativeName>
</protein>
<dbReference type="EC" id="6.3.1.2"/>
<dbReference type="EMBL" id="U46207">
    <property type="protein sequence ID" value="AAB01817.1"/>
    <property type="molecule type" value="mRNA"/>
</dbReference>
<dbReference type="PIR" id="T08088">
    <property type="entry name" value="T08088"/>
</dbReference>
<dbReference type="RefSeq" id="XP_001699902.1">
    <property type="nucleotide sequence ID" value="XM_001699850.1"/>
</dbReference>
<dbReference type="SMR" id="Q42688"/>
<dbReference type="PaxDb" id="3055-EDP07598"/>
<dbReference type="ProMEX" id="Q42688"/>
<dbReference type="KEGG" id="cre:CHLRE_02g113200v5"/>
<dbReference type="eggNOG" id="KOG0683">
    <property type="taxonomic scope" value="Eukaryota"/>
</dbReference>
<dbReference type="HOGENOM" id="CLU_036762_1_1_1"/>
<dbReference type="OrthoDB" id="1936100at2759"/>
<dbReference type="GO" id="GO:0005737">
    <property type="term" value="C:cytoplasm"/>
    <property type="evidence" value="ECO:0007669"/>
    <property type="project" value="UniProtKB-SubCell"/>
</dbReference>
<dbReference type="GO" id="GO:0005524">
    <property type="term" value="F:ATP binding"/>
    <property type="evidence" value="ECO:0007669"/>
    <property type="project" value="UniProtKB-KW"/>
</dbReference>
<dbReference type="GO" id="GO:0004356">
    <property type="term" value="F:glutamine synthetase activity"/>
    <property type="evidence" value="ECO:0007669"/>
    <property type="project" value="UniProtKB-EC"/>
</dbReference>
<dbReference type="GO" id="GO:0006542">
    <property type="term" value="P:glutamine biosynthetic process"/>
    <property type="evidence" value="ECO:0007669"/>
    <property type="project" value="InterPro"/>
</dbReference>
<dbReference type="FunFam" id="3.10.20.70:FF:000004">
    <property type="entry name" value="Glutamine synthetase"/>
    <property type="match status" value="1"/>
</dbReference>
<dbReference type="FunFam" id="3.30.590.10:FF:000004">
    <property type="entry name" value="Glutamine synthetase"/>
    <property type="match status" value="1"/>
</dbReference>
<dbReference type="Gene3D" id="3.10.20.70">
    <property type="entry name" value="Glutamine synthetase, N-terminal domain"/>
    <property type="match status" value="1"/>
</dbReference>
<dbReference type="Gene3D" id="3.30.590.10">
    <property type="entry name" value="Glutamine synthetase/guanido kinase, catalytic domain"/>
    <property type="match status" value="1"/>
</dbReference>
<dbReference type="InterPro" id="IPR008147">
    <property type="entry name" value="Gln_synt_N"/>
</dbReference>
<dbReference type="InterPro" id="IPR036651">
    <property type="entry name" value="Gln_synt_N_sf"/>
</dbReference>
<dbReference type="InterPro" id="IPR014746">
    <property type="entry name" value="Gln_synth/guanido_kin_cat_dom"/>
</dbReference>
<dbReference type="InterPro" id="IPR008146">
    <property type="entry name" value="Gln_synth_cat_dom"/>
</dbReference>
<dbReference type="InterPro" id="IPR027303">
    <property type="entry name" value="Gln_synth_gly_rich_site"/>
</dbReference>
<dbReference type="InterPro" id="IPR027302">
    <property type="entry name" value="Gln_synth_N_conserv_site"/>
</dbReference>
<dbReference type="InterPro" id="IPR050292">
    <property type="entry name" value="Glutamine_Synthetase"/>
</dbReference>
<dbReference type="PANTHER" id="PTHR20852">
    <property type="entry name" value="GLUTAMINE SYNTHETASE"/>
    <property type="match status" value="1"/>
</dbReference>
<dbReference type="PANTHER" id="PTHR20852:SF93">
    <property type="entry name" value="GLUTAMINE SYNTHETASE CYTOSOLIC ISOZYME 1-1"/>
    <property type="match status" value="1"/>
</dbReference>
<dbReference type="Pfam" id="PF00120">
    <property type="entry name" value="Gln-synt_C"/>
    <property type="match status" value="1"/>
</dbReference>
<dbReference type="Pfam" id="PF03951">
    <property type="entry name" value="Gln-synt_N"/>
    <property type="match status" value="1"/>
</dbReference>
<dbReference type="SMART" id="SM01230">
    <property type="entry name" value="Gln-synt_C"/>
    <property type="match status" value="1"/>
</dbReference>
<dbReference type="SUPFAM" id="SSF54368">
    <property type="entry name" value="Glutamine synthetase, N-terminal domain"/>
    <property type="match status" value="1"/>
</dbReference>
<dbReference type="SUPFAM" id="SSF55931">
    <property type="entry name" value="Glutamine synthetase/guanido kinase"/>
    <property type="match status" value="1"/>
</dbReference>
<dbReference type="PROSITE" id="PS00180">
    <property type="entry name" value="GLNA_1"/>
    <property type="match status" value="1"/>
</dbReference>
<dbReference type="PROSITE" id="PS00181">
    <property type="entry name" value="GLNA_ATP"/>
    <property type="match status" value="1"/>
</dbReference>
<dbReference type="PROSITE" id="PS51986">
    <property type="entry name" value="GS_BETA_GRASP"/>
    <property type="match status" value="1"/>
</dbReference>
<dbReference type="PROSITE" id="PS51987">
    <property type="entry name" value="GS_CATALYTIC"/>
    <property type="match status" value="1"/>
</dbReference>
<organism>
    <name type="scientific">Chlamydomonas reinhardtii</name>
    <name type="common">Chlamydomonas smithii</name>
    <dbReference type="NCBI Taxonomy" id="3055"/>
    <lineage>
        <taxon>Eukaryota</taxon>
        <taxon>Viridiplantae</taxon>
        <taxon>Chlorophyta</taxon>
        <taxon>core chlorophytes</taxon>
        <taxon>Chlorophyceae</taxon>
        <taxon>CS clade</taxon>
        <taxon>Chlamydomonadales</taxon>
        <taxon>Chlamydomonadaceae</taxon>
        <taxon>Chlamydomonas</taxon>
    </lineage>
</organism>
<reference key="1">
    <citation type="journal article" date="1996" name="Plant Physiol.">
        <title>Isolation and characterization of glutamine synthetase genes in Chlamydomonas reinhardtii.</title>
        <authorList>
            <person name="Chen Q."/>
            <person name="Silflow C.D."/>
        </authorList>
    </citation>
    <scope>NUCLEOTIDE SEQUENCE [MRNA]</scope>
    <source>
        <strain>A55</strain>
    </source>
</reference>
<keyword id="KW-0067">ATP-binding</keyword>
<keyword id="KW-0963">Cytoplasm</keyword>
<keyword id="KW-0436">Ligase</keyword>
<keyword id="KW-0547">Nucleotide-binding</keyword>
<evidence type="ECO:0000250" key="1"/>
<evidence type="ECO:0000255" key="2">
    <source>
        <dbReference type="PROSITE-ProRule" id="PRU01330"/>
    </source>
</evidence>
<evidence type="ECO:0000255" key="3">
    <source>
        <dbReference type="PROSITE-ProRule" id="PRU01331"/>
    </source>
</evidence>
<evidence type="ECO:0000305" key="4"/>
<sequence length="382" mass="42146">MAAGSVGVFATDEKIGSLLDQSITRHFLSTVTDQQGKICAEYVWIGGSMHDVRSKSRTLSTIPTKPEDLPHWNYDGSSTGQAPGHDSEVYLIPRSIFKDPFRGGDNILVMCDCYEPPKVNPDGTLAAPKPIPTNTRFACAEVMEKAKKEEPWFGIEQEYTLLNAITKWPLGWPKGGYPAPQGPYYCSAGAGVAIGRDVAEVHYRLCLAAGVNISGVNAEVLPSQWEYQVGPCEGITMGDHMWMSRYIMYRVCEMFNVEVSFDPKPIPGDWNGSGGHTNYSTKATRTAPDGWKVIQEHCAKLEARHAVHIAAYGEGNERRLTGKHETSSMSDFSWGVANRGCSIRVGRMVPVEKSGYYEDRRPASNLDAYVVTRLIVETTILL</sequence>
<accession>Q42688</accession>
<comment type="catalytic activity">
    <reaction>
        <text>L-glutamate + NH4(+) + ATP = L-glutamine + ADP + phosphate + H(+)</text>
        <dbReference type="Rhea" id="RHEA:16169"/>
        <dbReference type="ChEBI" id="CHEBI:15378"/>
        <dbReference type="ChEBI" id="CHEBI:28938"/>
        <dbReference type="ChEBI" id="CHEBI:29985"/>
        <dbReference type="ChEBI" id="CHEBI:30616"/>
        <dbReference type="ChEBI" id="CHEBI:43474"/>
        <dbReference type="ChEBI" id="CHEBI:58359"/>
        <dbReference type="ChEBI" id="CHEBI:456216"/>
        <dbReference type="EC" id="6.3.1.2"/>
    </reaction>
</comment>
<comment type="subunit">
    <text evidence="1">Homooctamer.</text>
</comment>
<comment type="subcellular location">
    <subcellularLocation>
        <location>Cytoplasm</location>
    </subcellularLocation>
</comment>
<comment type="miscellaneous">
    <text>Irreversibly inhibited by the herbicide L-phosphinothricin (PPT).</text>
</comment>
<comment type="similarity">
    <text evidence="4">Belongs to the glutamine synthetase family.</text>
</comment>
<gene>
    <name type="primary">GLN1</name>
</gene>
<name>GLNA1_CHLRE</name>
<proteinExistence type="evidence at transcript level"/>
<feature type="chain" id="PRO_0000153169" description="Glutamine synthetase cytosolic isozyme">
    <location>
        <begin position="1"/>
        <end position="382"/>
    </location>
</feature>
<feature type="domain" description="GS beta-grasp" evidence="2">
    <location>
        <begin position="36"/>
        <end position="118"/>
    </location>
</feature>
<feature type="domain" description="GS catalytic" evidence="3">
    <location>
        <begin position="135"/>
        <end position="382"/>
    </location>
</feature>